<proteinExistence type="inferred from homology"/>
<protein>
    <recommendedName>
        <fullName evidence="1">Triosephosphate isomerase</fullName>
        <shortName evidence="1">TIM</shortName>
        <shortName evidence="1">TPI</shortName>
        <ecNumber evidence="1">5.3.1.1</ecNumber>
    </recommendedName>
    <alternativeName>
        <fullName evidence="1">Triose-phosphate isomerase</fullName>
    </alternativeName>
</protein>
<name>TPIS_FLAJ1</name>
<accession>A5FE44</accession>
<sequence length="250" mass="27036">MRKSIVAGNWKMHKNAAQTEELLNELIAKIPAKTNAQVIVAPTFVNLQAAAAKLKNTTIGVSAQNVHQAEGGAFTGEISADMLTSIGVNTVILGHSERRAIFHETDALIANKVDTALKHDMTVIFCFGEELKDRQSGNHFNIVENQLRDGVFHIAKESWSKIVLAYEPVWAIGTGETASPEQAQEMHEFIRETIRKAFGAEIADEVSILYGGSVKPENAKEIFSKPDVDGGLIGGAALKADDFLAIVTAI</sequence>
<feature type="chain" id="PRO_1000076645" description="Triosephosphate isomerase">
    <location>
        <begin position="1"/>
        <end position="250"/>
    </location>
</feature>
<feature type="active site" description="Electrophile" evidence="1">
    <location>
        <position position="95"/>
    </location>
</feature>
<feature type="active site" description="Proton acceptor" evidence="1">
    <location>
        <position position="167"/>
    </location>
</feature>
<feature type="binding site" evidence="1">
    <location>
        <begin position="9"/>
        <end position="11"/>
    </location>
    <ligand>
        <name>substrate</name>
    </ligand>
</feature>
<feature type="binding site" evidence="1">
    <location>
        <position position="173"/>
    </location>
    <ligand>
        <name>substrate</name>
    </ligand>
</feature>
<feature type="binding site" evidence="1">
    <location>
        <position position="213"/>
    </location>
    <ligand>
        <name>substrate</name>
    </ligand>
</feature>
<feature type="binding site" evidence="1">
    <location>
        <begin position="234"/>
        <end position="235"/>
    </location>
    <ligand>
        <name>substrate</name>
    </ligand>
</feature>
<dbReference type="EC" id="5.3.1.1" evidence="1"/>
<dbReference type="EMBL" id="CP000685">
    <property type="protein sequence ID" value="ABQ06518.1"/>
    <property type="molecule type" value="Genomic_DNA"/>
</dbReference>
<dbReference type="RefSeq" id="WP_012025485.1">
    <property type="nucleotide sequence ID" value="NZ_MUGZ01000010.1"/>
</dbReference>
<dbReference type="SMR" id="A5FE44"/>
<dbReference type="STRING" id="376686.Fjoh_3504"/>
<dbReference type="KEGG" id="fjo:Fjoh_3504"/>
<dbReference type="eggNOG" id="COG0149">
    <property type="taxonomic scope" value="Bacteria"/>
</dbReference>
<dbReference type="HOGENOM" id="CLU_024251_2_3_10"/>
<dbReference type="OrthoDB" id="9809429at2"/>
<dbReference type="UniPathway" id="UPA00109">
    <property type="reaction ID" value="UER00189"/>
</dbReference>
<dbReference type="UniPathway" id="UPA00138"/>
<dbReference type="Proteomes" id="UP000006694">
    <property type="component" value="Chromosome"/>
</dbReference>
<dbReference type="GO" id="GO:0005829">
    <property type="term" value="C:cytosol"/>
    <property type="evidence" value="ECO:0007669"/>
    <property type="project" value="TreeGrafter"/>
</dbReference>
<dbReference type="GO" id="GO:0004807">
    <property type="term" value="F:triose-phosphate isomerase activity"/>
    <property type="evidence" value="ECO:0007669"/>
    <property type="project" value="UniProtKB-UniRule"/>
</dbReference>
<dbReference type="GO" id="GO:0006094">
    <property type="term" value="P:gluconeogenesis"/>
    <property type="evidence" value="ECO:0007669"/>
    <property type="project" value="UniProtKB-UniRule"/>
</dbReference>
<dbReference type="GO" id="GO:0046166">
    <property type="term" value="P:glyceraldehyde-3-phosphate biosynthetic process"/>
    <property type="evidence" value="ECO:0007669"/>
    <property type="project" value="TreeGrafter"/>
</dbReference>
<dbReference type="GO" id="GO:0019563">
    <property type="term" value="P:glycerol catabolic process"/>
    <property type="evidence" value="ECO:0007669"/>
    <property type="project" value="TreeGrafter"/>
</dbReference>
<dbReference type="GO" id="GO:0006096">
    <property type="term" value="P:glycolytic process"/>
    <property type="evidence" value="ECO:0007669"/>
    <property type="project" value="UniProtKB-UniRule"/>
</dbReference>
<dbReference type="CDD" id="cd00311">
    <property type="entry name" value="TIM"/>
    <property type="match status" value="1"/>
</dbReference>
<dbReference type="FunFam" id="3.20.20.70:FF:000016">
    <property type="entry name" value="Triosephosphate isomerase"/>
    <property type="match status" value="1"/>
</dbReference>
<dbReference type="Gene3D" id="3.20.20.70">
    <property type="entry name" value="Aldolase class I"/>
    <property type="match status" value="1"/>
</dbReference>
<dbReference type="HAMAP" id="MF_00147_B">
    <property type="entry name" value="TIM_B"/>
    <property type="match status" value="1"/>
</dbReference>
<dbReference type="InterPro" id="IPR013785">
    <property type="entry name" value="Aldolase_TIM"/>
</dbReference>
<dbReference type="InterPro" id="IPR035990">
    <property type="entry name" value="TIM_sf"/>
</dbReference>
<dbReference type="InterPro" id="IPR022896">
    <property type="entry name" value="TrioseP_Isoase_bac/euk"/>
</dbReference>
<dbReference type="InterPro" id="IPR000652">
    <property type="entry name" value="Triosephosphate_isomerase"/>
</dbReference>
<dbReference type="InterPro" id="IPR020861">
    <property type="entry name" value="Triosephosphate_isomerase_AS"/>
</dbReference>
<dbReference type="NCBIfam" id="TIGR00419">
    <property type="entry name" value="tim"/>
    <property type="match status" value="1"/>
</dbReference>
<dbReference type="PANTHER" id="PTHR21139">
    <property type="entry name" value="TRIOSEPHOSPHATE ISOMERASE"/>
    <property type="match status" value="1"/>
</dbReference>
<dbReference type="PANTHER" id="PTHR21139:SF42">
    <property type="entry name" value="TRIOSEPHOSPHATE ISOMERASE"/>
    <property type="match status" value="1"/>
</dbReference>
<dbReference type="Pfam" id="PF00121">
    <property type="entry name" value="TIM"/>
    <property type="match status" value="1"/>
</dbReference>
<dbReference type="SUPFAM" id="SSF51351">
    <property type="entry name" value="Triosephosphate isomerase (TIM)"/>
    <property type="match status" value="1"/>
</dbReference>
<dbReference type="PROSITE" id="PS00171">
    <property type="entry name" value="TIM_1"/>
    <property type="match status" value="1"/>
</dbReference>
<dbReference type="PROSITE" id="PS51440">
    <property type="entry name" value="TIM_2"/>
    <property type="match status" value="1"/>
</dbReference>
<organism>
    <name type="scientific">Flavobacterium johnsoniae (strain ATCC 17061 / DSM 2064 / JCM 8514 / BCRC 14874 / CCUG 350202 / NBRC 14942 / NCIMB 11054 / UW101)</name>
    <name type="common">Cytophaga johnsonae</name>
    <dbReference type="NCBI Taxonomy" id="376686"/>
    <lineage>
        <taxon>Bacteria</taxon>
        <taxon>Pseudomonadati</taxon>
        <taxon>Bacteroidota</taxon>
        <taxon>Flavobacteriia</taxon>
        <taxon>Flavobacteriales</taxon>
        <taxon>Flavobacteriaceae</taxon>
        <taxon>Flavobacterium</taxon>
    </lineage>
</organism>
<reference key="1">
    <citation type="journal article" date="2009" name="Appl. Environ. Microbiol.">
        <title>Novel features of the polysaccharide-digesting gliding bacterium Flavobacterium johnsoniae as revealed by genome sequence analysis.</title>
        <authorList>
            <person name="McBride M.J."/>
            <person name="Xie G."/>
            <person name="Martens E.C."/>
            <person name="Lapidus A."/>
            <person name="Henrissat B."/>
            <person name="Rhodes R.G."/>
            <person name="Goltsman E."/>
            <person name="Wang W."/>
            <person name="Xu J."/>
            <person name="Hunnicutt D.W."/>
            <person name="Staroscik A.M."/>
            <person name="Hoover T.R."/>
            <person name="Cheng Y.Q."/>
            <person name="Stein J.L."/>
        </authorList>
    </citation>
    <scope>NUCLEOTIDE SEQUENCE [LARGE SCALE GENOMIC DNA]</scope>
    <source>
        <strain>ATCC 17061 / DSM 2064 / JCM 8514 / BCRC 14874 / CCUG 350202 / NBRC 14942 / NCIMB 11054 / UW101</strain>
    </source>
</reference>
<gene>
    <name evidence="1" type="primary">tpiA</name>
    <name type="ordered locus">Fjoh_3504</name>
</gene>
<evidence type="ECO:0000255" key="1">
    <source>
        <dbReference type="HAMAP-Rule" id="MF_00147"/>
    </source>
</evidence>
<comment type="function">
    <text evidence="1">Involved in the gluconeogenesis. Catalyzes stereospecifically the conversion of dihydroxyacetone phosphate (DHAP) to D-glyceraldehyde-3-phosphate (G3P).</text>
</comment>
<comment type="catalytic activity">
    <reaction evidence="1">
        <text>D-glyceraldehyde 3-phosphate = dihydroxyacetone phosphate</text>
        <dbReference type="Rhea" id="RHEA:18585"/>
        <dbReference type="ChEBI" id="CHEBI:57642"/>
        <dbReference type="ChEBI" id="CHEBI:59776"/>
        <dbReference type="EC" id="5.3.1.1"/>
    </reaction>
</comment>
<comment type="pathway">
    <text evidence="1">Carbohydrate biosynthesis; gluconeogenesis.</text>
</comment>
<comment type="pathway">
    <text evidence="1">Carbohydrate degradation; glycolysis; D-glyceraldehyde 3-phosphate from glycerone phosphate: step 1/1.</text>
</comment>
<comment type="subunit">
    <text evidence="1">Homodimer.</text>
</comment>
<comment type="subcellular location">
    <subcellularLocation>
        <location evidence="1">Cytoplasm</location>
    </subcellularLocation>
</comment>
<comment type="similarity">
    <text evidence="1">Belongs to the triosephosphate isomerase family.</text>
</comment>
<keyword id="KW-0963">Cytoplasm</keyword>
<keyword id="KW-0312">Gluconeogenesis</keyword>
<keyword id="KW-0324">Glycolysis</keyword>
<keyword id="KW-0413">Isomerase</keyword>